<protein>
    <recommendedName>
        <fullName>CASP-like protein 2U1</fullName>
        <shortName>SbCASPL2U1</shortName>
    </recommendedName>
</protein>
<evidence type="ECO:0000250" key="1"/>
<evidence type="ECO:0000255" key="2"/>
<evidence type="ECO:0000305" key="3"/>
<accession>C5YP66</accession>
<feature type="chain" id="PRO_0000391588" description="CASP-like protein 2U1">
    <location>
        <begin position="1"/>
        <end position="193"/>
    </location>
</feature>
<feature type="topological domain" description="Cytoplasmic" evidence="2">
    <location>
        <begin position="1"/>
        <end position="18"/>
    </location>
</feature>
<feature type="transmembrane region" description="Helical" evidence="2">
    <location>
        <begin position="19"/>
        <end position="39"/>
    </location>
</feature>
<feature type="topological domain" description="Extracellular" evidence="2">
    <location>
        <begin position="40"/>
        <end position="61"/>
    </location>
</feature>
<feature type="transmembrane region" description="Helical" evidence="2">
    <location>
        <begin position="62"/>
        <end position="82"/>
    </location>
</feature>
<feature type="topological domain" description="Cytoplasmic" evidence="2">
    <location>
        <begin position="83"/>
        <end position="113"/>
    </location>
</feature>
<feature type="transmembrane region" description="Helical" evidence="2">
    <location>
        <begin position="114"/>
        <end position="134"/>
    </location>
</feature>
<feature type="topological domain" description="Extracellular" evidence="2">
    <location>
        <begin position="135"/>
        <end position="156"/>
    </location>
</feature>
<feature type="transmembrane region" description="Helical" evidence="2">
    <location>
        <begin position="157"/>
        <end position="177"/>
    </location>
</feature>
<feature type="topological domain" description="Cytoplasmic" evidence="2">
    <location>
        <begin position="178"/>
        <end position="193"/>
    </location>
</feature>
<name>CSPLJ_SORBI</name>
<keyword id="KW-1003">Cell membrane</keyword>
<keyword id="KW-0472">Membrane</keyword>
<keyword id="KW-1185">Reference proteome</keyword>
<keyword id="KW-0812">Transmembrane</keyword>
<keyword id="KW-1133">Transmembrane helix</keyword>
<sequence>MAMALALGGGQDAERKVKVAEVALRALLCGLGALAAALVATDTQTRTFFSLQKKASYTDMKAMVFLVDAAAVAAGYSLLQLAARCCGGGAMSSGRGDGGGRGRALSWCVFSCDQALAYVLLAAVAAALQASVVAKRGQPELQWMGICALYGAFCRQAGAGLATAVVAGLAAVLLAFLSAFNLFRLYGSGGTKS</sequence>
<reference key="1">
    <citation type="journal article" date="2009" name="Nature">
        <title>The Sorghum bicolor genome and the diversification of grasses.</title>
        <authorList>
            <person name="Paterson A.H."/>
            <person name="Bowers J.E."/>
            <person name="Bruggmann R."/>
            <person name="Dubchak I."/>
            <person name="Grimwood J."/>
            <person name="Gundlach H."/>
            <person name="Haberer G."/>
            <person name="Hellsten U."/>
            <person name="Mitros T."/>
            <person name="Poliakov A."/>
            <person name="Schmutz J."/>
            <person name="Spannagl M."/>
            <person name="Tang H."/>
            <person name="Wang X."/>
            <person name="Wicker T."/>
            <person name="Bharti A.K."/>
            <person name="Chapman J."/>
            <person name="Feltus F.A."/>
            <person name="Gowik U."/>
            <person name="Grigoriev I.V."/>
            <person name="Lyons E."/>
            <person name="Maher C.A."/>
            <person name="Martis M."/>
            <person name="Narechania A."/>
            <person name="Otillar R.P."/>
            <person name="Penning B.W."/>
            <person name="Salamov A.A."/>
            <person name="Wang Y."/>
            <person name="Zhang L."/>
            <person name="Carpita N.C."/>
            <person name="Freeling M."/>
            <person name="Gingle A.R."/>
            <person name="Hash C.T."/>
            <person name="Keller B."/>
            <person name="Klein P."/>
            <person name="Kresovich S."/>
            <person name="McCann M.C."/>
            <person name="Ming R."/>
            <person name="Peterson D.G."/>
            <person name="Mehboob-ur-Rahman M."/>
            <person name="Ware D."/>
            <person name="Westhoff P."/>
            <person name="Mayer K.F.X."/>
            <person name="Messing J."/>
            <person name="Rokhsar D.S."/>
        </authorList>
    </citation>
    <scope>NUCLEOTIDE SEQUENCE [LARGE SCALE GENOMIC DNA]</scope>
    <source>
        <strain>cv. BTx623</strain>
    </source>
</reference>
<reference key="2">
    <citation type="journal article" date="2018" name="Plant J.">
        <title>The Sorghum bicolor reference genome: improved assembly, gene annotations, a transcriptome atlas, and signatures of genome organization.</title>
        <authorList>
            <person name="McCormick R.F."/>
            <person name="Truong S.K."/>
            <person name="Sreedasyam A."/>
            <person name="Jenkins J."/>
            <person name="Shu S."/>
            <person name="Sims D."/>
            <person name="Kennedy M."/>
            <person name="Amirebrahimi M."/>
            <person name="Weers B.D."/>
            <person name="McKinley B."/>
            <person name="Mattison A."/>
            <person name="Morishige D.T."/>
            <person name="Grimwood J."/>
            <person name="Schmutz J."/>
            <person name="Mullet J.E."/>
        </authorList>
    </citation>
    <scope>GENOME REANNOTATION</scope>
    <source>
        <strain>cv. BTx623</strain>
    </source>
</reference>
<reference key="3">
    <citation type="journal article" date="2014" name="Plant Physiol.">
        <title>Functional and evolutionary analysis of the CASPARIAN STRIP MEMBRANE DOMAIN PROTEIN family.</title>
        <authorList>
            <person name="Roppolo D."/>
            <person name="Boeckmann B."/>
            <person name="Pfister A."/>
            <person name="Boutet E."/>
            <person name="Rubio M.C."/>
            <person name="Denervaud-Tendon V."/>
            <person name="Vermeer J.E."/>
            <person name="Gheyselinck J."/>
            <person name="Xenarios I."/>
            <person name="Geldner N."/>
        </authorList>
    </citation>
    <scope>GENE FAMILY</scope>
    <scope>NOMENCLATURE</scope>
</reference>
<proteinExistence type="evidence at transcript level"/>
<comment type="subunit">
    <text evidence="1">Homodimer and heterodimers.</text>
</comment>
<comment type="subcellular location">
    <subcellularLocation>
        <location evidence="1">Cell membrane</location>
        <topology evidence="1">Multi-pass membrane protein</topology>
    </subcellularLocation>
</comment>
<comment type="similarity">
    <text evidence="3">Belongs to the Casparian strip membrane proteins (CASP) family.</text>
</comment>
<gene>
    <name type="ordered locus">Sb08g016550</name>
</gene>
<dbReference type="EMBL" id="CM000767">
    <property type="protein sequence ID" value="EES17099.1"/>
    <property type="molecule type" value="Genomic_DNA"/>
</dbReference>
<dbReference type="RefSeq" id="XP_002443261.1">
    <property type="nucleotide sequence ID" value="XM_002443216.1"/>
</dbReference>
<dbReference type="SMR" id="C5YP66"/>
<dbReference type="FunCoup" id="C5YP66">
    <property type="interactions" value="300"/>
</dbReference>
<dbReference type="STRING" id="4558.C5YP66"/>
<dbReference type="EnsemblPlants" id="EES17099">
    <property type="protein sequence ID" value="EES17099"/>
    <property type="gene ID" value="SORBI_3008G111500"/>
</dbReference>
<dbReference type="Gramene" id="EES17099">
    <property type="protein sequence ID" value="EES17099"/>
    <property type="gene ID" value="SORBI_3008G111500"/>
</dbReference>
<dbReference type="KEGG" id="sbi:8064612"/>
<dbReference type="eggNOG" id="ENOG502QQH2">
    <property type="taxonomic scope" value="Eukaryota"/>
</dbReference>
<dbReference type="HOGENOM" id="CLU_066104_0_1_1"/>
<dbReference type="InParanoid" id="C5YP66"/>
<dbReference type="OMA" id="QWMGICA"/>
<dbReference type="OrthoDB" id="689701at2759"/>
<dbReference type="Proteomes" id="UP000000768">
    <property type="component" value="Chromosome 8"/>
</dbReference>
<dbReference type="GO" id="GO:0005886">
    <property type="term" value="C:plasma membrane"/>
    <property type="evidence" value="ECO:0007669"/>
    <property type="project" value="UniProtKB-SubCell"/>
</dbReference>
<dbReference type="InterPro" id="IPR006459">
    <property type="entry name" value="CASP/CASPL"/>
</dbReference>
<dbReference type="InterPro" id="IPR006702">
    <property type="entry name" value="CASP_dom"/>
</dbReference>
<dbReference type="NCBIfam" id="TIGR01569">
    <property type="entry name" value="A_tha_TIGR01569"/>
    <property type="match status" value="1"/>
</dbReference>
<dbReference type="PANTHER" id="PTHR33573:SF64">
    <property type="entry name" value="CASP-LIKE PROTEIN 2B1"/>
    <property type="match status" value="1"/>
</dbReference>
<dbReference type="PANTHER" id="PTHR33573">
    <property type="entry name" value="CASP-LIKE PROTEIN 4A4"/>
    <property type="match status" value="1"/>
</dbReference>
<dbReference type="Pfam" id="PF04535">
    <property type="entry name" value="CASP_dom"/>
    <property type="match status" value="1"/>
</dbReference>
<organism>
    <name type="scientific">Sorghum bicolor</name>
    <name type="common">Sorghum</name>
    <name type="synonym">Sorghum vulgare</name>
    <dbReference type="NCBI Taxonomy" id="4558"/>
    <lineage>
        <taxon>Eukaryota</taxon>
        <taxon>Viridiplantae</taxon>
        <taxon>Streptophyta</taxon>
        <taxon>Embryophyta</taxon>
        <taxon>Tracheophyta</taxon>
        <taxon>Spermatophyta</taxon>
        <taxon>Magnoliopsida</taxon>
        <taxon>Liliopsida</taxon>
        <taxon>Poales</taxon>
        <taxon>Poaceae</taxon>
        <taxon>PACMAD clade</taxon>
        <taxon>Panicoideae</taxon>
        <taxon>Andropogonodae</taxon>
        <taxon>Andropogoneae</taxon>
        <taxon>Sorghinae</taxon>
        <taxon>Sorghum</taxon>
    </lineage>
</organism>